<organism>
    <name type="scientific">Clostridium botulinum (strain ATCC 19397 / Type A)</name>
    <dbReference type="NCBI Taxonomy" id="441770"/>
    <lineage>
        <taxon>Bacteria</taxon>
        <taxon>Bacillati</taxon>
        <taxon>Bacillota</taxon>
        <taxon>Clostridia</taxon>
        <taxon>Eubacteriales</taxon>
        <taxon>Clostridiaceae</taxon>
        <taxon>Clostridium</taxon>
    </lineage>
</organism>
<keyword id="KW-0687">Ribonucleoprotein</keyword>
<keyword id="KW-0689">Ribosomal protein</keyword>
<keyword id="KW-0694">RNA-binding</keyword>
<keyword id="KW-0699">rRNA-binding</keyword>
<sequence>MARVKRAMNARKRHKKVLKLAKGYYGGKSKLFKTANESVIRALRNAYVGRKLKKRDYRKLWIARINAATRMNGLSYSKFMNGIKNAGIDINRKMLSEIAINDPKAFAELVDVAKKQLNA</sequence>
<gene>
    <name evidence="1" type="primary">rplT</name>
    <name type="ordered locus">CLB_3165</name>
</gene>
<evidence type="ECO:0000255" key="1">
    <source>
        <dbReference type="HAMAP-Rule" id="MF_00382"/>
    </source>
</evidence>
<evidence type="ECO:0000305" key="2"/>
<accession>A7FY84</accession>
<comment type="function">
    <text evidence="1">Binds directly to 23S ribosomal RNA and is necessary for the in vitro assembly process of the 50S ribosomal subunit. It is not involved in the protein synthesizing functions of that subunit.</text>
</comment>
<comment type="similarity">
    <text evidence="1">Belongs to the bacterial ribosomal protein bL20 family.</text>
</comment>
<name>RL20_CLOB1</name>
<dbReference type="EMBL" id="CP000726">
    <property type="protein sequence ID" value="ABS35083.1"/>
    <property type="molecule type" value="Genomic_DNA"/>
</dbReference>
<dbReference type="RefSeq" id="WP_003386545.1">
    <property type="nucleotide sequence ID" value="NC_009697.1"/>
</dbReference>
<dbReference type="SMR" id="A7FY84"/>
<dbReference type="GeneID" id="92939856"/>
<dbReference type="KEGG" id="cba:CLB_3165"/>
<dbReference type="HOGENOM" id="CLU_123265_0_1_9"/>
<dbReference type="GO" id="GO:1990904">
    <property type="term" value="C:ribonucleoprotein complex"/>
    <property type="evidence" value="ECO:0007669"/>
    <property type="project" value="UniProtKB-KW"/>
</dbReference>
<dbReference type="GO" id="GO:0005840">
    <property type="term" value="C:ribosome"/>
    <property type="evidence" value="ECO:0007669"/>
    <property type="project" value="UniProtKB-KW"/>
</dbReference>
<dbReference type="GO" id="GO:0019843">
    <property type="term" value="F:rRNA binding"/>
    <property type="evidence" value="ECO:0007669"/>
    <property type="project" value="UniProtKB-UniRule"/>
</dbReference>
<dbReference type="GO" id="GO:0003735">
    <property type="term" value="F:structural constituent of ribosome"/>
    <property type="evidence" value="ECO:0007669"/>
    <property type="project" value="InterPro"/>
</dbReference>
<dbReference type="GO" id="GO:0000027">
    <property type="term" value="P:ribosomal large subunit assembly"/>
    <property type="evidence" value="ECO:0007669"/>
    <property type="project" value="UniProtKB-UniRule"/>
</dbReference>
<dbReference type="GO" id="GO:0006412">
    <property type="term" value="P:translation"/>
    <property type="evidence" value="ECO:0007669"/>
    <property type="project" value="InterPro"/>
</dbReference>
<dbReference type="CDD" id="cd07026">
    <property type="entry name" value="Ribosomal_L20"/>
    <property type="match status" value="1"/>
</dbReference>
<dbReference type="FunFam" id="1.10.1900.20:FF:000001">
    <property type="entry name" value="50S ribosomal protein L20"/>
    <property type="match status" value="1"/>
</dbReference>
<dbReference type="Gene3D" id="6.10.160.10">
    <property type="match status" value="1"/>
</dbReference>
<dbReference type="Gene3D" id="1.10.1900.20">
    <property type="entry name" value="Ribosomal protein L20"/>
    <property type="match status" value="1"/>
</dbReference>
<dbReference type="HAMAP" id="MF_00382">
    <property type="entry name" value="Ribosomal_bL20"/>
    <property type="match status" value="1"/>
</dbReference>
<dbReference type="InterPro" id="IPR005813">
    <property type="entry name" value="Ribosomal_bL20"/>
</dbReference>
<dbReference type="InterPro" id="IPR049946">
    <property type="entry name" value="RIBOSOMAL_L20_CS"/>
</dbReference>
<dbReference type="InterPro" id="IPR035566">
    <property type="entry name" value="Ribosomal_protein_bL20_C"/>
</dbReference>
<dbReference type="NCBIfam" id="TIGR01032">
    <property type="entry name" value="rplT_bact"/>
    <property type="match status" value="1"/>
</dbReference>
<dbReference type="PANTHER" id="PTHR10986">
    <property type="entry name" value="39S RIBOSOMAL PROTEIN L20"/>
    <property type="match status" value="1"/>
</dbReference>
<dbReference type="Pfam" id="PF00453">
    <property type="entry name" value="Ribosomal_L20"/>
    <property type="match status" value="1"/>
</dbReference>
<dbReference type="PRINTS" id="PR00062">
    <property type="entry name" value="RIBOSOMALL20"/>
</dbReference>
<dbReference type="SUPFAM" id="SSF74731">
    <property type="entry name" value="Ribosomal protein L20"/>
    <property type="match status" value="1"/>
</dbReference>
<dbReference type="PROSITE" id="PS00937">
    <property type="entry name" value="RIBOSOMAL_L20"/>
    <property type="match status" value="1"/>
</dbReference>
<feature type="chain" id="PRO_1000048957" description="Large ribosomal subunit protein bL20">
    <location>
        <begin position="1"/>
        <end position="119"/>
    </location>
</feature>
<proteinExistence type="inferred from homology"/>
<protein>
    <recommendedName>
        <fullName evidence="1">Large ribosomal subunit protein bL20</fullName>
    </recommendedName>
    <alternativeName>
        <fullName evidence="2">50S ribosomal protein L20</fullName>
    </alternativeName>
</protein>
<reference key="1">
    <citation type="journal article" date="2007" name="PLoS ONE">
        <title>Analysis of the neurotoxin complex genes in Clostridium botulinum A1-A4 and B1 strains: BoNT/A3, /Ba4 and /B1 clusters are located within plasmids.</title>
        <authorList>
            <person name="Smith T.J."/>
            <person name="Hill K.K."/>
            <person name="Foley B.T."/>
            <person name="Detter J.C."/>
            <person name="Munk A.C."/>
            <person name="Bruce D.C."/>
            <person name="Doggett N.A."/>
            <person name="Smith L.A."/>
            <person name="Marks J.D."/>
            <person name="Xie G."/>
            <person name="Brettin T.S."/>
        </authorList>
    </citation>
    <scope>NUCLEOTIDE SEQUENCE [LARGE SCALE GENOMIC DNA]</scope>
    <source>
        <strain>ATCC 19397 / Type A</strain>
    </source>
</reference>